<protein>
    <recommendedName>
        <fullName evidence="1">tRNA (pseudouridine(54)-N(1))-methyltransferase</fullName>
        <ecNumber evidence="1">2.1.1.257</ecNumber>
    </recommendedName>
</protein>
<gene>
    <name evidence="1" type="primary">trmY</name>
    <name type="ordered locus">MmarC5_0731</name>
</gene>
<dbReference type="EC" id="2.1.1.257" evidence="1"/>
<dbReference type="EMBL" id="CP000609">
    <property type="protein sequence ID" value="ABO35041.1"/>
    <property type="molecule type" value="Genomic_DNA"/>
</dbReference>
<dbReference type="RefSeq" id="WP_011868495.1">
    <property type="nucleotide sequence ID" value="NC_009135.1"/>
</dbReference>
<dbReference type="SMR" id="A4FXV7"/>
<dbReference type="STRING" id="402880.MmarC5_0731"/>
<dbReference type="GeneID" id="4928971"/>
<dbReference type="KEGG" id="mmq:MmarC5_0731"/>
<dbReference type="eggNOG" id="arCOG01239">
    <property type="taxonomic scope" value="Archaea"/>
</dbReference>
<dbReference type="HOGENOM" id="CLU_107018_0_0_2"/>
<dbReference type="OrthoDB" id="27492at2157"/>
<dbReference type="Proteomes" id="UP000000253">
    <property type="component" value="Chromosome"/>
</dbReference>
<dbReference type="GO" id="GO:0005737">
    <property type="term" value="C:cytoplasm"/>
    <property type="evidence" value="ECO:0007669"/>
    <property type="project" value="UniProtKB-SubCell"/>
</dbReference>
<dbReference type="GO" id="GO:0008757">
    <property type="term" value="F:S-adenosylmethionine-dependent methyltransferase activity"/>
    <property type="evidence" value="ECO:0007669"/>
    <property type="project" value="UniProtKB-UniRule"/>
</dbReference>
<dbReference type="GO" id="GO:0008175">
    <property type="term" value="F:tRNA methyltransferase activity"/>
    <property type="evidence" value="ECO:0007669"/>
    <property type="project" value="UniProtKB-UniRule"/>
</dbReference>
<dbReference type="GO" id="GO:0030488">
    <property type="term" value="P:tRNA methylation"/>
    <property type="evidence" value="ECO:0007669"/>
    <property type="project" value="UniProtKB-UniRule"/>
</dbReference>
<dbReference type="CDD" id="cd18087">
    <property type="entry name" value="TrmY-like"/>
    <property type="match status" value="1"/>
</dbReference>
<dbReference type="Gene3D" id="3.40.1280.10">
    <property type="match status" value="1"/>
</dbReference>
<dbReference type="HAMAP" id="MF_00587">
    <property type="entry name" value="tRNA_methyltr_TrmY"/>
    <property type="match status" value="1"/>
</dbReference>
<dbReference type="InterPro" id="IPR029028">
    <property type="entry name" value="Alpha/beta_knot_MTases"/>
</dbReference>
<dbReference type="InterPro" id="IPR007158">
    <property type="entry name" value="TrmY"/>
</dbReference>
<dbReference type="InterPro" id="IPR029026">
    <property type="entry name" value="tRNA_m1G_MTases_N"/>
</dbReference>
<dbReference type="NCBIfam" id="NF002560">
    <property type="entry name" value="PRK02135.1"/>
    <property type="match status" value="1"/>
</dbReference>
<dbReference type="PANTHER" id="PTHR40703">
    <property type="entry name" value="TRNA (PSEUDOURIDINE(54)-N(1))-METHYLTRANSFERASE"/>
    <property type="match status" value="1"/>
</dbReference>
<dbReference type="PANTHER" id="PTHR40703:SF1">
    <property type="entry name" value="TRNA (PSEUDOURIDINE(54)-N(1))-METHYLTRANSFERASE"/>
    <property type="match status" value="1"/>
</dbReference>
<dbReference type="Pfam" id="PF04013">
    <property type="entry name" value="Methyltrn_RNA_2"/>
    <property type="match status" value="1"/>
</dbReference>
<dbReference type="SUPFAM" id="SSF75217">
    <property type="entry name" value="alpha/beta knot"/>
    <property type="match status" value="1"/>
</dbReference>
<proteinExistence type="inferred from homology"/>
<organism>
    <name type="scientific">Methanococcus maripaludis (strain C5 / ATCC BAA-1333)</name>
    <dbReference type="NCBI Taxonomy" id="402880"/>
    <lineage>
        <taxon>Archaea</taxon>
        <taxon>Methanobacteriati</taxon>
        <taxon>Methanobacteriota</taxon>
        <taxon>Methanomada group</taxon>
        <taxon>Methanococci</taxon>
        <taxon>Methanococcales</taxon>
        <taxon>Methanococcaceae</taxon>
        <taxon>Methanococcus</taxon>
    </lineage>
</organism>
<sequence length="198" mass="22693">MKEFIIKANKTVTNGEINLKDLPGSSGRLDLICRCVNSAFFLSHDLRRDTIFYSVLYGPPNPPIALQFVGNELKRVSPDERSIALFIKKALEKDASELWKESTSGIYSSKWEFRDIILKKKNEGKRIFYLHLNGKPLENFEFKNDEDFVFILGDHIGIGEEDEEFLEEIGAEKISLSPLELHADHCIILVHNILDKLK</sequence>
<name>TRMY_METM5</name>
<keyword id="KW-0963">Cytoplasm</keyword>
<keyword id="KW-0489">Methyltransferase</keyword>
<keyword id="KW-0949">S-adenosyl-L-methionine</keyword>
<keyword id="KW-0808">Transferase</keyword>
<keyword id="KW-0819">tRNA processing</keyword>
<evidence type="ECO:0000255" key="1">
    <source>
        <dbReference type="HAMAP-Rule" id="MF_00587"/>
    </source>
</evidence>
<comment type="function">
    <text evidence="1">Specifically catalyzes the N1-methylation of pseudouridine at position 54 (Psi54) in tRNAs.</text>
</comment>
<comment type="catalytic activity">
    <reaction evidence="1">
        <text>pseudouridine(54) in tRNA + S-adenosyl-L-methionine = N(1)-methylpseudouridine(54) in tRNA + S-adenosyl-L-homocysteine + H(+)</text>
        <dbReference type="Rhea" id="RHEA:55292"/>
        <dbReference type="Rhea" id="RHEA-COMP:14140"/>
        <dbReference type="Rhea" id="RHEA-COMP:14141"/>
        <dbReference type="ChEBI" id="CHEBI:15378"/>
        <dbReference type="ChEBI" id="CHEBI:57856"/>
        <dbReference type="ChEBI" id="CHEBI:59789"/>
        <dbReference type="ChEBI" id="CHEBI:65314"/>
        <dbReference type="ChEBI" id="CHEBI:74890"/>
        <dbReference type="EC" id="2.1.1.257"/>
    </reaction>
</comment>
<comment type="subunit">
    <text evidence="1">Homodimer.</text>
</comment>
<comment type="subcellular location">
    <subcellularLocation>
        <location evidence="1">Cytoplasm</location>
    </subcellularLocation>
</comment>
<comment type="similarity">
    <text evidence="1">Belongs to the methyltransferase superfamily. TrmY family.</text>
</comment>
<reference key="1">
    <citation type="submission" date="2007-03" db="EMBL/GenBank/DDBJ databases">
        <title>Complete sequence of chromosome of Methanococcus maripaludis C5.</title>
        <authorList>
            <consortium name="US DOE Joint Genome Institute"/>
            <person name="Copeland A."/>
            <person name="Lucas S."/>
            <person name="Lapidus A."/>
            <person name="Barry K."/>
            <person name="Glavina del Rio T."/>
            <person name="Dalin E."/>
            <person name="Tice H."/>
            <person name="Pitluck S."/>
            <person name="Chertkov O."/>
            <person name="Brettin T."/>
            <person name="Bruce D."/>
            <person name="Han C."/>
            <person name="Detter J.C."/>
            <person name="Schmutz J."/>
            <person name="Larimer F."/>
            <person name="Land M."/>
            <person name="Hauser L."/>
            <person name="Kyrpides N."/>
            <person name="Mikhailova N."/>
            <person name="Sieprawska-Lupa M."/>
            <person name="Whitman W.B."/>
            <person name="Richardson P."/>
        </authorList>
    </citation>
    <scope>NUCLEOTIDE SEQUENCE [LARGE SCALE GENOMIC DNA]</scope>
    <source>
        <strain>C5 / ATCC BAA-1333</strain>
    </source>
</reference>
<accession>A4FXV7</accession>
<feature type="chain" id="PRO_1000025468" description="tRNA (pseudouridine(54)-N(1))-methyltransferase">
    <location>
        <begin position="1"/>
        <end position="198"/>
    </location>
</feature>
<feature type="binding site" evidence="1">
    <location>
        <position position="130"/>
    </location>
    <ligand>
        <name>S-adenosyl-L-methionine</name>
        <dbReference type="ChEBI" id="CHEBI:59789"/>
    </ligand>
</feature>
<feature type="binding site" evidence="1">
    <location>
        <position position="153"/>
    </location>
    <ligand>
        <name>S-adenosyl-L-methionine</name>
        <dbReference type="ChEBI" id="CHEBI:59789"/>
    </ligand>
</feature>
<feature type="binding site" evidence="1">
    <location>
        <begin position="176"/>
        <end position="181"/>
    </location>
    <ligand>
        <name>S-adenosyl-L-methionine</name>
        <dbReference type="ChEBI" id="CHEBI:59789"/>
    </ligand>
</feature>
<feature type="binding site" evidence="1">
    <location>
        <position position="186"/>
    </location>
    <ligand>
        <name>S-adenosyl-L-methionine</name>
        <dbReference type="ChEBI" id="CHEBI:59789"/>
    </ligand>
</feature>